<comment type="function">
    <text evidence="1">Specifically methylates the adenine in position 37 of tRNA(1)(Val) (anticodon cmo5UAC).</text>
</comment>
<comment type="catalytic activity">
    <reaction>
        <text>adenosine(37) in tRNA1(Val) + S-adenosyl-L-methionine = N(6)-methyladenosine(37) in tRNA1(Val) + S-adenosyl-L-homocysteine + H(+)</text>
        <dbReference type="Rhea" id="RHEA:43160"/>
        <dbReference type="Rhea" id="RHEA-COMP:10369"/>
        <dbReference type="Rhea" id="RHEA-COMP:10370"/>
        <dbReference type="ChEBI" id="CHEBI:15378"/>
        <dbReference type="ChEBI" id="CHEBI:57856"/>
        <dbReference type="ChEBI" id="CHEBI:59789"/>
        <dbReference type="ChEBI" id="CHEBI:74411"/>
        <dbReference type="ChEBI" id="CHEBI:74449"/>
        <dbReference type="EC" id="2.1.1.223"/>
    </reaction>
</comment>
<comment type="subcellular location">
    <subcellularLocation>
        <location evidence="2">Cytoplasm</location>
    </subcellularLocation>
</comment>
<comment type="similarity">
    <text evidence="2">Belongs to the methyltransferase superfamily. tRNA (adenine-N(6)-)-methyltransferase family.</text>
</comment>
<comment type="sequence caution" evidence="2">
    <conflict type="erroneous initiation">
        <sequence resource="EMBL-CDS" id="AAC22079"/>
    </conflict>
</comment>
<organism>
    <name type="scientific">Haemophilus influenzae (strain ATCC 51907 / DSM 11121 / KW20 / Rd)</name>
    <dbReference type="NCBI Taxonomy" id="71421"/>
    <lineage>
        <taxon>Bacteria</taxon>
        <taxon>Pseudomonadati</taxon>
        <taxon>Pseudomonadota</taxon>
        <taxon>Gammaproteobacteria</taxon>
        <taxon>Pasteurellales</taxon>
        <taxon>Pasteurellaceae</taxon>
        <taxon>Haemophilus</taxon>
    </lineage>
</organism>
<proteinExistence type="inferred from homology"/>
<keyword id="KW-0963">Cytoplasm</keyword>
<keyword id="KW-0489">Methyltransferase</keyword>
<keyword id="KW-1185">Reference proteome</keyword>
<keyword id="KW-0949">S-adenosyl-L-methionine</keyword>
<keyword id="KW-0808">Transferase</keyword>
<keyword id="KW-0819">tRNA processing</keyword>
<dbReference type="EC" id="2.1.1.223"/>
<dbReference type="EMBL" id="L42023">
    <property type="protein sequence ID" value="AAC22079.1"/>
    <property type="status" value="ALT_INIT"/>
    <property type="molecule type" value="Genomic_DNA"/>
</dbReference>
<dbReference type="PIR" id="C64152">
    <property type="entry name" value="C64152"/>
</dbReference>
<dbReference type="RefSeq" id="NP_438584.1">
    <property type="nucleotide sequence ID" value="NC_000907.1"/>
</dbReference>
<dbReference type="SMR" id="P44702"/>
<dbReference type="STRING" id="71421.HI_0423"/>
<dbReference type="EnsemblBacteria" id="AAC22079">
    <property type="protein sequence ID" value="AAC22079"/>
    <property type="gene ID" value="HI_0423"/>
</dbReference>
<dbReference type="KEGG" id="hin:HI_0423"/>
<dbReference type="PATRIC" id="fig|71421.8.peg.443"/>
<dbReference type="eggNOG" id="COG4123">
    <property type="taxonomic scope" value="Bacteria"/>
</dbReference>
<dbReference type="HOGENOM" id="CLU_061983_0_0_6"/>
<dbReference type="OrthoDB" id="5383291at2"/>
<dbReference type="Proteomes" id="UP000000579">
    <property type="component" value="Chromosome"/>
</dbReference>
<dbReference type="GO" id="GO:0005737">
    <property type="term" value="C:cytoplasm"/>
    <property type="evidence" value="ECO:0007669"/>
    <property type="project" value="UniProtKB-SubCell"/>
</dbReference>
<dbReference type="GO" id="GO:0003676">
    <property type="term" value="F:nucleic acid binding"/>
    <property type="evidence" value="ECO:0007669"/>
    <property type="project" value="InterPro"/>
</dbReference>
<dbReference type="GO" id="GO:0016430">
    <property type="term" value="F:tRNA (adenine-N6)-methyltransferase activity"/>
    <property type="evidence" value="ECO:0007669"/>
    <property type="project" value="UniProtKB-UniRule"/>
</dbReference>
<dbReference type="GO" id="GO:0032259">
    <property type="term" value="P:methylation"/>
    <property type="evidence" value="ECO:0007669"/>
    <property type="project" value="UniProtKB-KW"/>
</dbReference>
<dbReference type="GO" id="GO:0008033">
    <property type="term" value="P:tRNA processing"/>
    <property type="evidence" value="ECO:0007669"/>
    <property type="project" value="UniProtKB-UniRule"/>
</dbReference>
<dbReference type="CDD" id="cd02440">
    <property type="entry name" value="AdoMet_MTases"/>
    <property type="match status" value="1"/>
</dbReference>
<dbReference type="Gene3D" id="3.40.50.150">
    <property type="entry name" value="Vaccinia Virus protein VP39"/>
    <property type="match status" value="1"/>
</dbReference>
<dbReference type="HAMAP" id="MF_01872">
    <property type="entry name" value="tRNA_methyltr_YfiC"/>
    <property type="match status" value="1"/>
</dbReference>
<dbReference type="InterPro" id="IPR002052">
    <property type="entry name" value="DNA_methylase_N6_adenine_CS"/>
</dbReference>
<dbReference type="InterPro" id="IPR029063">
    <property type="entry name" value="SAM-dependent_MTases_sf"/>
</dbReference>
<dbReference type="InterPro" id="IPR007848">
    <property type="entry name" value="Small_mtfrase_dom"/>
</dbReference>
<dbReference type="InterPro" id="IPR050210">
    <property type="entry name" value="tRNA_Adenine-N(6)_MTase"/>
</dbReference>
<dbReference type="InterPro" id="IPR022882">
    <property type="entry name" value="tRNA_adenine-N6_MeTrfase"/>
</dbReference>
<dbReference type="PANTHER" id="PTHR47739">
    <property type="entry name" value="TRNA1(VAL) (ADENINE(37)-N6)-METHYLTRANSFERASE"/>
    <property type="match status" value="1"/>
</dbReference>
<dbReference type="PANTHER" id="PTHR47739:SF1">
    <property type="entry name" value="TRNA1(VAL) (ADENINE(37)-N6)-METHYLTRANSFERASE"/>
    <property type="match status" value="1"/>
</dbReference>
<dbReference type="Pfam" id="PF05175">
    <property type="entry name" value="MTS"/>
    <property type="match status" value="1"/>
</dbReference>
<dbReference type="PRINTS" id="PR00507">
    <property type="entry name" value="N12N6MTFRASE"/>
</dbReference>
<dbReference type="SUPFAM" id="SSF53335">
    <property type="entry name" value="S-adenosyl-L-methionine-dependent methyltransferases"/>
    <property type="match status" value="1"/>
</dbReference>
<dbReference type="PROSITE" id="PS00092">
    <property type="entry name" value="N6_MTASE"/>
    <property type="match status" value="1"/>
</dbReference>
<gene>
    <name type="ordered locus">HI_0423</name>
</gene>
<feature type="chain" id="PRO_0000169267" description="tRNA1(Val) (adenine(37)-N6)-methyltransferase">
    <location>
        <begin position="1"/>
        <end position="232"/>
    </location>
</feature>
<accession>P44702</accession>
<evidence type="ECO:0000250" key="1"/>
<evidence type="ECO:0000305" key="2"/>
<reference key="1">
    <citation type="journal article" date="1995" name="Science">
        <title>Whole-genome random sequencing and assembly of Haemophilus influenzae Rd.</title>
        <authorList>
            <person name="Fleischmann R.D."/>
            <person name="Adams M.D."/>
            <person name="White O."/>
            <person name="Clayton R.A."/>
            <person name="Kirkness E.F."/>
            <person name="Kerlavage A.R."/>
            <person name="Bult C.J."/>
            <person name="Tomb J.-F."/>
            <person name="Dougherty B.A."/>
            <person name="Merrick J.M."/>
            <person name="McKenney K."/>
            <person name="Sutton G.G."/>
            <person name="FitzHugh W."/>
            <person name="Fields C.A."/>
            <person name="Gocayne J.D."/>
            <person name="Scott J.D."/>
            <person name="Shirley R."/>
            <person name="Liu L.-I."/>
            <person name="Glodek A."/>
            <person name="Kelley J.M."/>
            <person name="Weidman J.F."/>
            <person name="Phillips C.A."/>
            <person name="Spriggs T."/>
            <person name="Hedblom E."/>
            <person name="Cotton M.D."/>
            <person name="Utterback T.R."/>
            <person name="Hanna M.C."/>
            <person name="Nguyen D.T."/>
            <person name="Saudek D.M."/>
            <person name="Brandon R.C."/>
            <person name="Fine L.D."/>
            <person name="Fritchman J.L."/>
            <person name="Fuhrmann J.L."/>
            <person name="Geoghagen N.S.M."/>
            <person name="Gnehm C.L."/>
            <person name="McDonald L.A."/>
            <person name="Small K.V."/>
            <person name="Fraser C.M."/>
            <person name="Smith H.O."/>
            <person name="Venter J.C."/>
        </authorList>
    </citation>
    <scope>NUCLEOTIDE SEQUENCE [LARGE SCALE GENOMIC DNA]</scope>
    <source>
        <strain>ATCC 51907 / DSM 11121 / KW20 / Rd</strain>
    </source>
</reference>
<protein>
    <recommendedName>
        <fullName>tRNA1(Val) (adenine(37)-N6)-methyltransferase</fullName>
        <ecNumber>2.1.1.223</ecNumber>
    </recommendedName>
    <alternativeName>
        <fullName>tRNA m6A37 methyltransferase</fullName>
    </alternativeName>
</protein>
<name>TRMN6_HAEIN</name>
<sequence length="232" mass="26563">MSRFTFKQFHINQNSCAMKVGTDGILLGAWADVKHCKNILDMGCGTGLLALMLAQRTEENCQIQAVELDPIAAKQAQENINNSVWKNRIQLTQVDIQHFLQTTEQTFDLIVANPPYFEQGIACKNEERELARYTKQSHLNWLEWAATRLSENGRISFVLPYEAGKTLTKSTALFCIKQTNVITKIGKTPQRMLLTFAKQPEVLMQDQLVIYDADNQYTEAFIELTKDFYLKF</sequence>